<reference key="1">
    <citation type="journal article" date="2002" name="Biochem. Biophys. Res. Commun.">
        <title>Demonstration of dimethylnonanoyl-CoA thioesterase activity in rat liver peroxisomes followed by purification and molecular cloning of the thioesterase involved.</title>
        <authorList>
            <person name="Ofman R."/>
            <person name="el Mrabet L."/>
            <person name="Dacremont G."/>
            <person name="Spijer D."/>
            <person name="Wanders R.J."/>
        </authorList>
    </citation>
    <scope>NUCLEOTIDE SEQUENCE [MRNA]</scope>
    <scope>FUNCTION</scope>
    <scope>CATALYTIC ACTIVITY</scope>
    <scope>SUBCELLULAR LOCATION</scope>
    <scope>IDENTIFICATION BY MASS SPECTROMETRY</scope>
</reference>
<reference key="2">
    <citation type="journal article" date="1999" name="J. Biol. Chem.">
        <title>Identification of peroxisomal acyl-CoA thioesterases in yeast and humans.</title>
        <authorList>
            <person name="Jones J.M."/>
            <person name="Nau K."/>
            <person name="Geraghty M.T."/>
            <person name="Erdmann R."/>
            <person name="Gould S.J."/>
        </authorList>
    </citation>
    <scope>SUBCELLULAR LOCATION</scope>
</reference>
<accession>Q8VHK0</accession>
<proteinExistence type="evidence at protein level"/>
<gene>
    <name type="primary">Acot8</name>
    <name evidence="7 8" type="synonym">Pte1</name>
</gene>
<dbReference type="EC" id="3.1.2.1" evidence="6"/>
<dbReference type="EC" id="3.1.2.11" evidence="3"/>
<dbReference type="EC" id="3.1.2.2" evidence="3"/>
<dbReference type="EC" id="3.1.2.3" evidence="3"/>
<dbReference type="EC" id="3.1.2.5" evidence="3"/>
<dbReference type="EC" id="3.1.2.27" evidence="6"/>
<dbReference type="EMBL" id="AF452100">
    <property type="protein sequence ID" value="AAL66289.1"/>
    <property type="molecule type" value="mRNA"/>
</dbReference>
<dbReference type="SMR" id="Q8VHK0"/>
<dbReference type="FunCoup" id="Q8VHK0">
    <property type="interactions" value="451"/>
</dbReference>
<dbReference type="STRING" id="10116.ENSRNOP00000020740"/>
<dbReference type="SwissLipids" id="SLP:000001955"/>
<dbReference type="iPTMnet" id="Q8VHK0"/>
<dbReference type="PhosphoSitePlus" id="Q8VHK0"/>
<dbReference type="jPOST" id="Q8VHK0"/>
<dbReference type="PaxDb" id="10116-ENSRNOP00000020740"/>
<dbReference type="UCSC" id="RGD:70368">
    <property type="organism name" value="rat"/>
</dbReference>
<dbReference type="AGR" id="RGD:70368"/>
<dbReference type="RGD" id="70368">
    <property type="gene designation" value="Acot8"/>
</dbReference>
<dbReference type="eggNOG" id="KOG3016">
    <property type="taxonomic scope" value="Eukaryota"/>
</dbReference>
<dbReference type="InParanoid" id="Q8VHK0"/>
<dbReference type="PhylomeDB" id="Q8VHK0"/>
<dbReference type="BRENDA" id="3.1.2.2">
    <property type="organism ID" value="5301"/>
</dbReference>
<dbReference type="BRENDA" id="3.1.2.20">
    <property type="organism ID" value="5301"/>
</dbReference>
<dbReference type="Reactome" id="R-RNO-193368">
    <property type="pathway name" value="Synthesis of bile acids and bile salts via 7alpha-hydroxycholesterol"/>
</dbReference>
<dbReference type="Reactome" id="R-RNO-2046106">
    <property type="pathway name" value="alpha-linolenic acid (ALA) metabolism"/>
</dbReference>
<dbReference type="Reactome" id="R-RNO-389887">
    <property type="pathway name" value="Beta-oxidation of pristanoyl-CoA"/>
</dbReference>
<dbReference type="Reactome" id="R-RNO-390247">
    <property type="pathway name" value="Beta-oxidation of very long chain fatty acids"/>
</dbReference>
<dbReference type="Reactome" id="R-RNO-9033241">
    <property type="pathway name" value="Peroxisomal protein import"/>
</dbReference>
<dbReference type="PRO" id="PR:Q8VHK0"/>
<dbReference type="Proteomes" id="UP000002494">
    <property type="component" value="Unplaced"/>
</dbReference>
<dbReference type="GO" id="GO:0005782">
    <property type="term" value="C:peroxisomal matrix"/>
    <property type="evidence" value="ECO:0000266"/>
    <property type="project" value="RGD"/>
</dbReference>
<dbReference type="GO" id="GO:0005777">
    <property type="term" value="C:peroxisome"/>
    <property type="evidence" value="ECO:0000314"/>
    <property type="project" value="UniProtKB"/>
</dbReference>
<dbReference type="GO" id="GO:0047603">
    <property type="term" value="F:acetoacetyl-CoA hydrolase activity"/>
    <property type="evidence" value="ECO:0007669"/>
    <property type="project" value="UniProtKB-EC"/>
</dbReference>
<dbReference type="GO" id="GO:0003986">
    <property type="term" value="F:acetyl-CoA hydrolase activity"/>
    <property type="evidence" value="ECO:0007669"/>
    <property type="project" value="UniProtKB-EC"/>
</dbReference>
<dbReference type="GO" id="GO:0052689">
    <property type="term" value="F:carboxylic ester hydrolase activity"/>
    <property type="evidence" value="ECO:0007669"/>
    <property type="project" value="UniProtKB-KW"/>
</dbReference>
<dbReference type="GO" id="GO:0033882">
    <property type="term" value="F:choloyl-CoA hydrolase activity"/>
    <property type="evidence" value="ECO:0000314"/>
    <property type="project" value="UniProtKB"/>
</dbReference>
<dbReference type="GO" id="GO:0047617">
    <property type="term" value="F:fatty acyl-CoA hydrolase activity"/>
    <property type="evidence" value="ECO:0000314"/>
    <property type="project" value="UniProtKB"/>
</dbReference>
<dbReference type="GO" id="GO:0047994">
    <property type="term" value="F:hydroxymethylglutaryl-CoA hydrolase activity"/>
    <property type="evidence" value="ECO:0007669"/>
    <property type="project" value="UniProtKB-EC"/>
</dbReference>
<dbReference type="GO" id="GO:0052816">
    <property type="term" value="F:long-chain fatty acyl-CoA hydrolase activity"/>
    <property type="evidence" value="ECO:0000250"/>
    <property type="project" value="UniProtKB"/>
</dbReference>
<dbReference type="GO" id="GO:0052815">
    <property type="term" value="F:medium-chain fatty acyl-CoA hydrolase activity"/>
    <property type="evidence" value="ECO:0000250"/>
    <property type="project" value="UniProtKB"/>
</dbReference>
<dbReference type="GO" id="GO:0004778">
    <property type="term" value="F:succinyl-CoA hydrolase activity"/>
    <property type="evidence" value="ECO:0007669"/>
    <property type="project" value="UniProtKB-EC"/>
</dbReference>
<dbReference type="GO" id="GO:0006637">
    <property type="term" value="P:acyl-CoA metabolic process"/>
    <property type="evidence" value="ECO:0000314"/>
    <property type="project" value="UniProtKB"/>
</dbReference>
<dbReference type="GO" id="GO:0043649">
    <property type="term" value="P:dicarboxylic acid catabolic process"/>
    <property type="evidence" value="ECO:0000266"/>
    <property type="project" value="RGD"/>
</dbReference>
<dbReference type="GO" id="GO:0009062">
    <property type="term" value="P:fatty acid catabolic process"/>
    <property type="evidence" value="ECO:0000318"/>
    <property type="project" value="GO_Central"/>
</dbReference>
<dbReference type="GO" id="GO:0010561">
    <property type="term" value="P:negative regulation of glycoprotein biosynthetic process"/>
    <property type="evidence" value="ECO:0000250"/>
    <property type="project" value="UniProtKB"/>
</dbReference>
<dbReference type="GO" id="GO:0016559">
    <property type="term" value="P:peroxisome fission"/>
    <property type="evidence" value="ECO:0000266"/>
    <property type="project" value="RGD"/>
</dbReference>
<dbReference type="CDD" id="cd03444">
    <property type="entry name" value="Thioesterase_II_repeat1"/>
    <property type="match status" value="1"/>
</dbReference>
<dbReference type="CDD" id="cd03445">
    <property type="entry name" value="Thioesterase_II_repeat2"/>
    <property type="match status" value="1"/>
</dbReference>
<dbReference type="FunFam" id="2.40.160.210:FF:000002">
    <property type="entry name" value="acyl-coenzyme A thioesterase 8"/>
    <property type="match status" value="1"/>
</dbReference>
<dbReference type="Gene3D" id="2.40.160.210">
    <property type="entry name" value="Acyl-CoA thioesterase, double hotdog domain"/>
    <property type="match status" value="1"/>
</dbReference>
<dbReference type="InterPro" id="IPR049450">
    <property type="entry name" value="ACOT8-like_C"/>
</dbReference>
<dbReference type="InterPro" id="IPR042171">
    <property type="entry name" value="Acyl-CoA_hotdog"/>
</dbReference>
<dbReference type="InterPro" id="IPR003703">
    <property type="entry name" value="Acyl_CoA_thio"/>
</dbReference>
<dbReference type="InterPro" id="IPR029069">
    <property type="entry name" value="HotDog_dom_sf"/>
</dbReference>
<dbReference type="InterPro" id="IPR049449">
    <property type="entry name" value="TesB_ACOT8-like_N"/>
</dbReference>
<dbReference type="NCBIfam" id="TIGR00189">
    <property type="entry name" value="tesB"/>
    <property type="match status" value="1"/>
</dbReference>
<dbReference type="PANTHER" id="PTHR11066">
    <property type="entry name" value="ACYL-COA THIOESTERASE"/>
    <property type="match status" value="1"/>
</dbReference>
<dbReference type="PANTHER" id="PTHR11066:SF34">
    <property type="entry name" value="ACYL-COENZYME A THIOESTERASE 8"/>
    <property type="match status" value="1"/>
</dbReference>
<dbReference type="Pfam" id="PF13622">
    <property type="entry name" value="4HBT_3"/>
    <property type="match status" value="1"/>
</dbReference>
<dbReference type="Pfam" id="PF20789">
    <property type="entry name" value="4HBT_3C"/>
    <property type="match status" value="1"/>
</dbReference>
<dbReference type="SUPFAM" id="SSF54637">
    <property type="entry name" value="Thioesterase/thiol ester dehydrase-isomerase"/>
    <property type="match status" value="2"/>
</dbReference>
<name>ACOT8_RAT</name>
<protein>
    <recommendedName>
        <fullName>Acyl-coenzyme A thioesterase 8</fullName>
        <shortName>Acyl-CoA thioesterase 8</shortName>
        <ecNumber evidence="6">3.1.2.1</ecNumber>
        <ecNumber evidence="3">3.1.2.11</ecNumber>
        <ecNumber evidence="3">3.1.2.2</ecNumber>
        <ecNumber evidence="3">3.1.2.3</ecNumber>
        <ecNumber evidence="3">3.1.2.5</ecNumber>
    </recommendedName>
    <alternativeName>
        <fullName>Choloyl-coenzyme A thioesterase</fullName>
        <ecNumber evidence="6">3.1.2.27</ecNumber>
    </alternativeName>
    <alternativeName>
        <fullName evidence="8">Peroxisomal acyl-coenzyme A thioester hydrolase 1</fullName>
        <shortName evidence="8">PTE-1</shortName>
    </alternativeName>
    <alternativeName>
        <fullName>Peroxisomal long-chain acyl-CoA thioesterase 1</fullName>
    </alternativeName>
</protein>
<sequence>MSKPEDLGDANGDADRGDLSGDLRSVLVTSVLNLEPLDEDLYRGRHYWVPTSQRLFGGQIVGQALVAAAKSVSEDVHVHSLHCYFVRAGDPKVPVLYHVERTRTGASFSVRAVKAVQHGKAIFICQASFQQMQPSPLQHQFSMPTVPPPEELLDHEALIDQYLRDPNLHEKYRVGLNRIAAREVPIEIKLVNPPALNQLQTLEPKQMFWVRARGYIGEGDIKMHCCVAAYISDYAFLGTALLPHQSKYKVNFMVSLDHSMWFHAPFRADHWMLYECESPWAGGSRGLVHGRLWRRDGVLAVTCAQEGVIRSKPRVSESKL</sequence>
<keyword id="KW-0276">Fatty acid metabolism</keyword>
<keyword id="KW-0378">Hydrolase</keyword>
<keyword id="KW-0443">Lipid metabolism</keyword>
<keyword id="KW-0576">Peroxisome</keyword>
<keyword id="KW-0962">Peroxisome biogenesis</keyword>
<keyword id="KW-1185">Reference proteome</keyword>
<keyword id="KW-0719">Serine esterase</keyword>
<evidence type="ECO:0000250" key="1"/>
<evidence type="ECO:0000250" key="2">
    <source>
        <dbReference type="UniProtKB" id="O14734"/>
    </source>
</evidence>
<evidence type="ECO:0000250" key="3">
    <source>
        <dbReference type="UniProtKB" id="P58137"/>
    </source>
</evidence>
<evidence type="ECO:0000255" key="4"/>
<evidence type="ECO:0000269" key="5">
    <source>
    </source>
</evidence>
<evidence type="ECO:0000269" key="6">
    <source>
    </source>
</evidence>
<evidence type="ECO:0000303" key="7">
    <source>
    </source>
</evidence>
<evidence type="ECO:0000303" key="8">
    <source>
    </source>
</evidence>
<evidence type="ECO:0000305" key="9"/>
<evidence type="ECO:0000305" key="10">
    <source>
    </source>
</evidence>
<organism>
    <name type="scientific">Rattus norvegicus</name>
    <name type="common">Rat</name>
    <dbReference type="NCBI Taxonomy" id="10116"/>
    <lineage>
        <taxon>Eukaryota</taxon>
        <taxon>Metazoa</taxon>
        <taxon>Chordata</taxon>
        <taxon>Craniata</taxon>
        <taxon>Vertebrata</taxon>
        <taxon>Euteleostomi</taxon>
        <taxon>Mammalia</taxon>
        <taxon>Eutheria</taxon>
        <taxon>Euarchontoglires</taxon>
        <taxon>Glires</taxon>
        <taxon>Rodentia</taxon>
        <taxon>Myomorpha</taxon>
        <taxon>Muroidea</taxon>
        <taxon>Muridae</taxon>
        <taxon>Murinae</taxon>
        <taxon>Rattus</taxon>
    </lineage>
</organism>
<comment type="function">
    <text evidence="2 3 6">Catalyzes the hydrolysis of acyl-CoAs into free fatty acids and coenzyme A (CoASH), regulating their respective intracellular levels (PubMed:11785945). Displays no strong substrate specificity with respect to the carboxylic acid moiety of Acyl-CoAs (By similarity). Hydrolyzes medium length (C2 to C20) straight-chain, saturated and unsaturated acyl-CoAS but is inactive towards substrates with longer aliphatic chains (PubMed:11785945). Moreover, it catalyzes the hydrolysis of CoA esters of bile acids, such as choloyl-CoA and chenodeoxycholoyl-CoA and competes with bile acid CoA:amino acid N-acyltransferase (BAAT) (By similarity). Is also able to hydrolyze CoA esters of dicarboxylic acids (By similarity). It is involved in the metabolic regulation of peroxisome proliferation (By similarity).</text>
</comment>
<comment type="catalytic activity">
    <reaction evidence="6">
        <text>choloyl-CoA + H2O = cholate + CoA + H(+)</text>
        <dbReference type="Rhea" id="RHEA:14541"/>
        <dbReference type="ChEBI" id="CHEBI:15377"/>
        <dbReference type="ChEBI" id="CHEBI:15378"/>
        <dbReference type="ChEBI" id="CHEBI:29747"/>
        <dbReference type="ChEBI" id="CHEBI:57287"/>
        <dbReference type="ChEBI" id="CHEBI:57373"/>
        <dbReference type="EC" id="3.1.2.27"/>
    </reaction>
    <physiologicalReaction direction="left-to-right" evidence="10">
        <dbReference type="Rhea" id="RHEA:14542"/>
    </physiologicalReaction>
</comment>
<comment type="catalytic activity">
    <reaction evidence="3">
        <text>chenodeoxycholoyl-CoA + H2O = chenodeoxycholate + CoA + H(+)</text>
        <dbReference type="Rhea" id="RHEA:31511"/>
        <dbReference type="ChEBI" id="CHEBI:15377"/>
        <dbReference type="ChEBI" id="CHEBI:15378"/>
        <dbReference type="ChEBI" id="CHEBI:36234"/>
        <dbReference type="ChEBI" id="CHEBI:57287"/>
        <dbReference type="ChEBI" id="CHEBI:62989"/>
        <dbReference type="EC" id="3.1.2.27"/>
    </reaction>
    <physiologicalReaction direction="left-to-right" evidence="3">
        <dbReference type="Rhea" id="RHEA:31512"/>
    </physiologicalReaction>
</comment>
<comment type="catalytic activity">
    <reaction evidence="6">
        <text>acetyl-CoA + H2O = acetate + CoA + H(+)</text>
        <dbReference type="Rhea" id="RHEA:20289"/>
        <dbReference type="ChEBI" id="CHEBI:15377"/>
        <dbReference type="ChEBI" id="CHEBI:15378"/>
        <dbReference type="ChEBI" id="CHEBI:30089"/>
        <dbReference type="ChEBI" id="CHEBI:57287"/>
        <dbReference type="ChEBI" id="CHEBI:57288"/>
        <dbReference type="EC" id="3.1.2.1"/>
    </reaction>
    <physiologicalReaction direction="left-to-right" evidence="10">
        <dbReference type="Rhea" id="RHEA:20290"/>
    </physiologicalReaction>
</comment>
<comment type="catalytic activity">
    <reaction evidence="6">
        <text>butanoyl-CoA + H2O = butanoate + CoA + H(+)</text>
        <dbReference type="Rhea" id="RHEA:40111"/>
        <dbReference type="ChEBI" id="CHEBI:15377"/>
        <dbReference type="ChEBI" id="CHEBI:15378"/>
        <dbReference type="ChEBI" id="CHEBI:17968"/>
        <dbReference type="ChEBI" id="CHEBI:57287"/>
        <dbReference type="ChEBI" id="CHEBI:57371"/>
    </reaction>
    <physiologicalReaction direction="left-to-right" evidence="10">
        <dbReference type="Rhea" id="RHEA:40112"/>
    </physiologicalReaction>
</comment>
<comment type="catalytic activity">
    <reaction evidence="6">
        <text>hexanoyl-CoA + H2O = hexanoate + CoA + H(+)</text>
        <dbReference type="Rhea" id="RHEA:40115"/>
        <dbReference type="ChEBI" id="CHEBI:15377"/>
        <dbReference type="ChEBI" id="CHEBI:15378"/>
        <dbReference type="ChEBI" id="CHEBI:17120"/>
        <dbReference type="ChEBI" id="CHEBI:57287"/>
        <dbReference type="ChEBI" id="CHEBI:62620"/>
    </reaction>
    <physiologicalReaction direction="left-to-right" evidence="10">
        <dbReference type="Rhea" id="RHEA:40116"/>
    </physiologicalReaction>
</comment>
<comment type="catalytic activity">
    <reaction evidence="6">
        <text>octanoyl-CoA + H2O = octanoate + CoA + H(+)</text>
        <dbReference type="Rhea" id="RHEA:30143"/>
        <dbReference type="ChEBI" id="CHEBI:15377"/>
        <dbReference type="ChEBI" id="CHEBI:15378"/>
        <dbReference type="ChEBI" id="CHEBI:25646"/>
        <dbReference type="ChEBI" id="CHEBI:57287"/>
        <dbReference type="ChEBI" id="CHEBI:57386"/>
    </reaction>
    <physiologicalReaction direction="left-to-right" evidence="10">
        <dbReference type="Rhea" id="RHEA:30144"/>
    </physiologicalReaction>
</comment>
<comment type="catalytic activity">
    <reaction evidence="6">
        <text>decanoyl-CoA + H2O = decanoate + CoA + H(+)</text>
        <dbReference type="Rhea" id="RHEA:40059"/>
        <dbReference type="ChEBI" id="CHEBI:15377"/>
        <dbReference type="ChEBI" id="CHEBI:15378"/>
        <dbReference type="ChEBI" id="CHEBI:27689"/>
        <dbReference type="ChEBI" id="CHEBI:57287"/>
        <dbReference type="ChEBI" id="CHEBI:61430"/>
    </reaction>
    <physiologicalReaction direction="left-to-right" evidence="10">
        <dbReference type="Rhea" id="RHEA:40060"/>
    </physiologicalReaction>
</comment>
<comment type="catalytic activity">
    <reaction evidence="6">
        <text>dodecanoyl-CoA + H2O = dodecanoate + CoA + H(+)</text>
        <dbReference type="Rhea" id="RHEA:30135"/>
        <dbReference type="ChEBI" id="CHEBI:15377"/>
        <dbReference type="ChEBI" id="CHEBI:15378"/>
        <dbReference type="ChEBI" id="CHEBI:18262"/>
        <dbReference type="ChEBI" id="CHEBI:57287"/>
        <dbReference type="ChEBI" id="CHEBI:57375"/>
    </reaction>
    <physiologicalReaction direction="left-to-right" evidence="10">
        <dbReference type="Rhea" id="RHEA:30136"/>
    </physiologicalReaction>
</comment>
<comment type="catalytic activity">
    <reaction evidence="6">
        <text>tetradecanoyl-CoA + H2O = tetradecanoate + CoA + H(+)</text>
        <dbReference type="Rhea" id="RHEA:40119"/>
        <dbReference type="ChEBI" id="CHEBI:15377"/>
        <dbReference type="ChEBI" id="CHEBI:15378"/>
        <dbReference type="ChEBI" id="CHEBI:30807"/>
        <dbReference type="ChEBI" id="CHEBI:57287"/>
        <dbReference type="ChEBI" id="CHEBI:57385"/>
    </reaction>
    <physiologicalReaction direction="left-to-right" evidence="10">
        <dbReference type="Rhea" id="RHEA:40120"/>
    </physiologicalReaction>
</comment>
<comment type="catalytic activity">
    <reaction evidence="6">
        <text>4,8-dimethylnonanoyl-CoA + H2O = 4,8-dimethylnonanoate + CoA + H(+)</text>
        <dbReference type="Rhea" id="RHEA:40223"/>
        <dbReference type="ChEBI" id="CHEBI:15377"/>
        <dbReference type="ChEBI" id="CHEBI:15378"/>
        <dbReference type="ChEBI" id="CHEBI:57287"/>
        <dbReference type="ChEBI" id="CHEBI:77061"/>
        <dbReference type="ChEBI" id="CHEBI:77063"/>
    </reaction>
    <physiologicalReaction direction="left-to-right" evidence="10">
        <dbReference type="Rhea" id="RHEA:40224"/>
    </physiologicalReaction>
</comment>
<comment type="catalytic activity">
    <reaction evidence="6">
        <text>2,6-dimethylheptanoyl-CoA + H2O = 2,6-dimethylheptanoate + CoA + H(+)</text>
        <dbReference type="Rhea" id="RHEA:59952"/>
        <dbReference type="ChEBI" id="CHEBI:15377"/>
        <dbReference type="ChEBI" id="CHEBI:15378"/>
        <dbReference type="ChEBI" id="CHEBI:57287"/>
        <dbReference type="ChEBI" id="CHEBI:84847"/>
        <dbReference type="ChEBI" id="CHEBI:143533"/>
    </reaction>
    <physiologicalReaction direction="left-to-right" evidence="10">
        <dbReference type="Rhea" id="RHEA:59953"/>
    </physiologicalReaction>
</comment>
<comment type="catalytic activity">
    <reaction evidence="3">
        <text>malonyl-CoA + H2O = malonate + CoA + H(+)</text>
        <dbReference type="Rhea" id="RHEA:40219"/>
        <dbReference type="ChEBI" id="CHEBI:15377"/>
        <dbReference type="ChEBI" id="CHEBI:15378"/>
        <dbReference type="ChEBI" id="CHEBI:15792"/>
        <dbReference type="ChEBI" id="CHEBI:57287"/>
        <dbReference type="ChEBI" id="CHEBI:57384"/>
    </reaction>
    <physiologicalReaction direction="left-to-right" evidence="3">
        <dbReference type="Rhea" id="RHEA:40220"/>
    </physiologicalReaction>
</comment>
<comment type="catalytic activity">
    <reaction evidence="3">
        <text>acetoacetyl-CoA + H2O = acetoacetate + CoA + H(+)</text>
        <dbReference type="Rhea" id="RHEA:15673"/>
        <dbReference type="ChEBI" id="CHEBI:13705"/>
        <dbReference type="ChEBI" id="CHEBI:15377"/>
        <dbReference type="ChEBI" id="CHEBI:15378"/>
        <dbReference type="ChEBI" id="CHEBI:57286"/>
        <dbReference type="ChEBI" id="CHEBI:57287"/>
        <dbReference type="EC" id="3.1.2.11"/>
    </reaction>
    <physiologicalReaction direction="left-to-right" evidence="3">
        <dbReference type="Rhea" id="RHEA:15674"/>
    </physiologicalReaction>
</comment>
<comment type="catalytic activity">
    <reaction evidence="3">
        <text>propanoyl-CoA + H2O = propanoate + CoA + H(+)</text>
        <dbReference type="Rhea" id="RHEA:40103"/>
        <dbReference type="ChEBI" id="CHEBI:15377"/>
        <dbReference type="ChEBI" id="CHEBI:15378"/>
        <dbReference type="ChEBI" id="CHEBI:17272"/>
        <dbReference type="ChEBI" id="CHEBI:57287"/>
        <dbReference type="ChEBI" id="CHEBI:57392"/>
    </reaction>
    <physiologicalReaction direction="left-to-right" evidence="3">
        <dbReference type="Rhea" id="RHEA:40104"/>
    </physiologicalReaction>
</comment>
<comment type="catalytic activity">
    <reaction evidence="3">
        <text>succinyl-CoA + H2O = succinate + CoA + H(+)</text>
        <dbReference type="Rhea" id="RHEA:11516"/>
        <dbReference type="ChEBI" id="CHEBI:15377"/>
        <dbReference type="ChEBI" id="CHEBI:15378"/>
        <dbReference type="ChEBI" id="CHEBI:30031"/>
        <dbReference type="ChEBI" id="CHEBI:57287"/>
        <dbReference type="ChEBI" id="CHEBI:57292"/>
        <dbReference type="EC" id="3.1.2.3"/>
    </reaction>
    <physiologicalReaction direction="left-to-right" evidence="3">
        <dbReference type="Rhea" id="RHEA:11517"/>
    </physiologicalReaction>
</comment>
<comment type="catalytic activity">
    <reaction evidence="3">
        <text>glutaryl-CoA + H2O = glutarate + CoA + H(+)</text>
        <dbReference type="Rhea" id="RHEA:40575"/>
        <dbReference type="ChEBI" id="CHEBI:15377"/>
        <dbReference type="ChEBI" id="CHEBI:15378"/>
        <dbReference type="ChEBI" id="CHEBI:30921"/>
        <dbReference type="ChEBI" id="CHEBI:57287"/>
        <dbReference type="ChEBI" id="CHEBI:57378"/>
    </reaction>
    <physiologicalReaction direction="left-to-right" evidence="3">
        <dbReference type="Rhea" id="RHEA:40576"/>
    </physiologicalReaction>
</comment>
<comment type="catalytic activity">
    <reaction evidence="3">
        <text>hexanedioyl-CoA + H2O = hexanedioate + CoA + H(+)</text>
        <dbReference type="Rhea" id="RHEA:40583"/>
        <dbReference type="ChEBI" id="CHEBI:15377"/>
        <dbReference type="ChEBI" id="CHEBI:15378"/>
        <dbReference type="ChEBI" id="CHEBI:17128"/>
        <dbReference type="ChEBI" id="CHEBI:57287"/>
        <dbReference type="ChEBI" id="CHEBI:76327"/>
    </reaction>
    <physiologicalReaction direction="left-to-right" evidence="3">
        <dbReference type="Rhea" id="RHEA:40584"/>
    </physiologicalReaction>
</comment>
<comment type="catalytic activity">
    <reaction evidence="3">
        <text>octanedioyl-CoA + H2O = octanedioate + CoA + H(+)</text>
        <dbReference type="Rhea" id="RHEA:40587"/>
        <dbReference type="ChEBI" id="CHEBI:15377"/>
        <dbReference type="ChEBI" id="CHEBI:15378"/>
        <dbReference type="ChEBI" id="CHEBI:57287"/>
        <dbReference type="ChEBI" id="CHEBI:76282"/>
        <dbReference type="ChEBI" id="CHEBI:76317"/>
    </reaction>
    <physiologicalReaction direction="left-to-right" evidence="3">
        <dbReference type="Rhea" id="RHEA:40588"/>
    </physiologicalReaction>
</comment>
<comment type="catalytic activity">
    <reaction evidence="3">
        <text>decanedioyl-CoA + H2O = decanedioate + CoA + H(+)</text>
        <dbReference type="Rhea" id="RHEA:40591"/>
        <dbReference type="ChEBI" id="CHEBI:15377"/>
        <dbReference type="ChEBI" id="CHEBI:15378"/>
        <dbReference type="ChEBI" id="CHEBI:57287"/>
        <dbReference type="ChEBI" id="CHEBI:76283"/>
        <dbReference type="ChEBI" id="CHEBI:76316"/>
    </reaction>
    <physiologicalReaction direction="left-to-right" evidence="3">
        <dbReference type="Rhea" id="RHEA:40592"/>
    </physiologicalReaction>
</comment>
<comment type="catalytic activity">
    <reaction evidence="3">
        <text>dodecanedioyl-CoA + H2O = dodecanedioate + CoA + H(+)</text>
        <dbReference type="Rhea" id="RHEA:40595"/>
        <dbReference type="ChEBI" id="CHEBI:15377"/>
        <dbReference type="ChEBI" id="CHEBI:15378"/>
        <dbReference type="ChEBI" id="CHEBI:57287"/>
        <dbReference type="ChEBI" id="CHEBI:76273"/>
        <dbReference type="ChEBI" id="CHEBI:76315"/>
    </reaction>
    <physiologicalReaction direction="left-to-right" evidence="3">
        <dbReference type="Rhea" id="RHEA:40596"/>
    </physiologicalReaction>
</comment>
<comment type="catalytic activity">
    <reaction evidence="3">
        <text>(9Z)-tetradecenoyl-CoA + H2O = (9Z)-tetradecenoate + CoA + H(+)</text>
        <dbReference type="Rhea" id="RHEA:40135"/>
        <dbReference type="ChEBI" id="CHEBI:15377"/>
        <dbReference type="ChEBI" id="CHEBI:15378"/>
        <dbReference type="ChEBI" id="CHEBI:32370"/>
        <dbReference type="ChEBI" id="CHEBI:57287"/>
        <dbReference type="ChEBI" id="CHEBI:65060"/>
    </reaction>
    <physiologicalReaction direction="left-to-right" evidence="3">
        <dbReference type="Rhea" id="RHEA:40136"/>
    </physiologicalReaction>
</comment>
<comment type="catalytic activity">
    <reaction evidence="3">
        <text>hexadecanoyl-CoA + H2O = hexadecanoate + CoA + H(+)</text>
        <dbReference type="Rhea" id="RHEA:16645"/>
        <dbReference type="ChEBI" id="CHEBI:7896"/>
        <dbReference type="ChEBI" id="CHEBI:15377"/>
        <dbReference type="ChEBI" id="CHEBI:15378"/>
        <dbReference type="ChEBI" id="CHEBI:57287"/>
        <dbReference type="ChEBI" id="CHEBI:57379"/>
        <dbReference type="EC" id="3.1.2.2"/>
    </reaction>
    <physiologicalReaction direction="left-to-right" evidence="3">
        <dbReference type="Rhea" id="RHEA:16646"/>
    </physiologicalReaction>
</comment>
<comment type="catalytic activity">
    <reaction evidence="3">
        <text>(9Z)-hexadecenoyl-CoA + H2O = (9Z)-hexadecenoate + CoA + H(+)</text>
        <dbReference type="Rhea" id="RHEA:40131"/>
        <dbReference type="ChEBI" id="CHEBI:15377"/>
        <dbReference type="ChEBI" id="CHEBI:15378"/>
        <dbReference type="ChEBI" id="CHEBI:32372"/>
        <dbReference type="ChEBI" id="CHEBI:57287"/>
        <dbReference type="ChEBI" id="CHEBI:61540"/>
    </reaction>
    <physiologicalReaction direction="left-to-right" evidence="3">
        <dbReference type="Rhea" id="RHEA:40132"/>
    </physiologicalReaction>
</comment>
<comment type="catalytic activity">
    <reaction evidence="3">
        <text>octadecanoyl-CoA + H2O = octadecanoate + CoA + H(+)</text>
        <dbReference type="Rhea" id="RHEA:30139"/>
        <dbReference type="ChEBI" id="CHEBI:15377"/>
        <dbReference type="ChEBI" id="CHEBI:15378"/>
        <dbReference type="ChEBI" id="CHEBI:25629"/>
        <dbReference type="ChEBI" id="CHEBI:57287"/>
        <dbReference type="ChEBI" id="CHEBI:57394"/>
    </reaction>
    <physiologicalReaction direction="left-to-right" evidence="3">
        <dbReference type="Rhea" id="RHEA:30140"/>
    </physiologicalReaction>
</comment>
<comment type="catalytic activity">
    <reaction evidence="3">
        <text>(9Z)-octadecenoyl-CoA + H2O = (9Z)-octadecenoate + CoA + H(+)</text>
        <dbReference type="Rhea" id="RHEA:40139"/>
        <dbReference type="ChEBI" id="CHEBI:15377"/>
        <dbReference type="ChEBI" id="CHEBI:15378"/>
        <dbReference type="ChEBI" id="CHEBI:30823"/>
        <dbReference type="ChEBI" id="CHEBI:57287"/>
        <dbReference type="ChEBI" id="CHEBI:57387"/>
    </reaction>
    <physiologicalReaction direction="left-to-right" evidence="3">
        <dbReference type="Rhea" id="RHEA:40140"/>
    </physiologicalReaction>
</comment>
<comment type="catalytic activity">
    <reaction evidence="3">
        <text>(9Z,12Z)-octadecadienoyl-CoA + H2O = (9Z,12Z)-octadecadienoate + CoA + H(+)</text>
        <dbReference type="Rhea" id="RHEA:40143"/>
        <dbReference type="ChEBI" id="CHEBI:15377"/>
        <dbReference type="ChEBI" id="CHEBI:15378"/>
        <dbReference type="ChEBI" id="CHEBI:30245"/>
        <dbReference type="ChEBI" id="CHEBI:57287"/>
        <dbReference type="ChEBI" id="CHEBI:57383"/>
    </reaction>
    <physiologicalReaction direction="left-to-right" evidence="3">
        <dbReference type="Rhea" id="RHEA:40144"/>
    </physiologicalReaction>
</comment>
<comment type="catalytic activity">
    <reaction evidence="3">
        <text>eicosanoyl-CoA + H2O = eicosanoate + CoA + H(+)</text>
        <dbReference type="Rhea" id="RHEA:40147"/>
        <dbReference type="ChEBI" id="CHEBI:15377"/>
        <dbReference type="ChEBI" id="CHEBI:15378"/>
        <dbReference type="ChEBI" id="CHEBI:32360"/>
        <dbReference type="ChEBI" id="CHEBI:57287"/>
        <dbReference type="ChEBI" id="CHEBI:57380"/>
    </reaction>
    <physiologicalReaction direction="left-to-right" evidence="3">
        <dbReference type="Rhea" id="RHEA:40148"/>
    </physiologicalReaction>
</comment>
<comment type="catalytic activity">
    <reaction evidence="3">
        <text>(5Z,8Z,11Z,14Z)-eicosatetraenoyl-CoA + H2O = (5Z,8Z,11Z,14Z)-eicosatetraenoate + CoA + H(+)</text>
        <dbReference type="Rhea" id="RHEA:40151"/>
        <dbReference type="ChEBI" id="CHEBI:15377"/>
        <dbReference type="ChEBI" id="CHEBI:15378"/>
        <dbReference type="ChEBI" id="CHEBI:32395"/>
        <dbReference type="ChEBI" id="CHEBI:57287"/>
        <dbReference type="ChEBI" id="CHEBI:57368"/>
    </reaction>
    <physiologicalReaction direction="left-to-right" evidence="3">
        <dbReference type="Rhea" id="RHEA:40152"/>
    </physiologicalReaction>
</comment>
<comment type="catalytic activity">
    <reaction evidence="3">
        <text>(3S)-3-hydroxy-3-methylglutaryl-CoA + H2O = 3-hydroxy-3-methylglutarate + CoA + H(+)</text>
        <dbReference type="Rhea" id="RHEA:16305"/>
        <dbReference type="ChEBI" id="CHEBI:15377"/>
        <dbReference type="ChEBI" id="CHEBI:15378"/>
        <dbReference type="ChEBI" id="CHEBI:17325"/>
        <dbReference type="ChEBI" id="CHEBI:43074"/>
        <dbReference type="ChEBI" id="CHEBI:57287"/>
        <dbReference type="EC" id="3.1.2.5"/>
    </reaction>
    <physiologicalReaction direction="left-to-right" evidence="3">
        <dbReference type="Rhea" id="RHEA:16306"/>
    </physiologicalReaction>
</comment>
<comment type="catalytic activity">
    <reaction evidence="3">
        <text>3alpha,7alpha,12alpha-trihydroxy-5beta-cholestan-26-oyl-CoA + H2O = 3alpha,7alpha,12alpha-trihydroxy-5beta-cholestan-26-oate + CoA + H(+)</text>
        <dbReference type="Rhea" id="RHEA:59936"/>
        <dbReference type="ChEBI" id="CHEBI:15377"/>
        <dbReference type="ChEBI" id="CHEBI:15378"/>
        <dbReference type="ChEBI" id="CHEBI:57287"/>
        <dbReference type="ChEBI" id="CHEBI:63001"/>
        <dbReference type="ChEBI" id="CHEBI:85674"/>
    </reaction>
    <physiologicalReaction direction="left-to-right" evidence="3">
        <dbReference type="Rhea" id="RHEA:59937"/>
    </physiologicalReaction>
</comment>
<comment type="catalytic activity">
    <reaction evidence="3">
        <text>2-methyloctadecanoyl-CoA + H2O = 2-methyloctadecanoate + CoA + H(+)</text>
        <dbReference type="Rhea" id="RHEA:59940"/>
        <dbReference type="ChEBI" id="CHEBI:15377"/>
        <dbReference type="ChEBI" id="CHEBI:15378"/>
        <dbReference type="ChEBI" id="CHEBI:57287"/>
        <dbReference type="ChEBI" id="CHEBI:143530"/>
        <dbReference type="ChEBI" id="CHEBI:143531"/>
    </reaction>
    <physiologicalReaction direction="left-to-right" evidence="3">
        <dbReference type="Rhea" id="RHEA:59941"/>
    </physiologicalReaction>
</comment>
<comment type="catalytic activity">
    <reaction evidence="3">
        <text>prostaglandin F2alpha-CoA + H2O = prostaglandin F2alpha + CoA + H(+)</text>
        <dbReference type="Rhea" id="RHEA:59948"/>
        <dbReference type="ChEBI" id="CHEBI:15377"/>
        <dbReference type="ChEBI" id="CHEBI:15378"/>
        <dbReference type="ChEBI" id="CHEBI:57287"/>
        <dbReference type="ChEBI" id="CHEBI:57404"/>
        <dbReference type="ChEBI" id="CHEBI:143532"/>
    </reaction>
    <physiologicalReaction direction="left-to-right" evidence="3">
        <dbReference type="Rhea" id="RHEA:59949"/>
    </physiologicalReaction>
</comment>
<comment type="activity regulation">
    <text evidence="3">Inhibited by CoASH (IC(50)=10-15 uM). Also inhibited by cysteine-reactive agents.</text>
</comment>
<comment type="subunit">
    <text evidence="3">homodimer.</text>
</comment>
<comment type="subcellular location">
    <subcellularLocation>
        <location evidence="5 6">Peroxisome matrix</location>
    </subcellularLocation>
    <text evidence="5 6">Predominantly localized in the peroxisome but a localization to the cytosol cannot be excluded.</text>
</comment>
<comment type="similarity">
    <text evidence="9">Belongs to the C/M/P thioester hydrolase family.</text>
</comment>
<feature type="chain" id="PRO_0000202154" description="Acyl-coenzyme A thioesterase 8">
    <location>
        <begin position="1"/>
        <end position="320"/>
    </location>
</feature>
<feature type="short sequence motif" description="Microbody targeting signal" evidence="4">
    <location>
        <begin position="318"/>
        <end position="320"/>
    </location>
</feature>
<feature type="active site" description="Charge relay system" evidence="1">
    <location>
        <position position="233"/>
    </location>
</feature>
<feature type="active site" description="Charge relay system" evidence="1">
    <location>
        <position position="255"/>
    </location>
</feature>
<feature type="active site" description="Charge relay system" evidence="1">
    <location>
        <position position="305"/>
    </location>
</feature>